<keyword id="KW-0148">Chlorophyll</keyword>
<keyword id="KW-0150">Chloroplast</keyword>
<keyword id="KW-0157">Chromophore</keyword>
<keyword id="KW-0472">Membrane</keyword>
<keyword id="KW-0602">Photosynthesis</keyword>
<keyword id="KW-0604">Photosystem II</keyword>
<keyword id="KW-0934">Plastid</keyword>
<keyword id="KW-0793">Thylakoid</keyword>
<keyword id="KW-0812">Transmembrane</keyword>
<keyword id="KW-1133">Transmembrane helix</keyword>
<sequence length="508" mass="56012">MGLPWYRVHTVVLNDPGRLLAVHIMHTALVAGWAGSMALYELAVFDPSDPVLDPMWRQGMFVIPFMTRLGITNSWGGWSITGGTVTNPGIWSYEGVAGSHILFSGLCFLAAIWHWVYWDLAIFSDERTGKPSLDLPKIFGIHLFLSGLACFGFGAFHVTGLYGPGIWVSDPYGLTGEVQPVNPAWGVEGFDPFVPGGIASHHIAAGTLGILAGLFHLSVRPPQRLYKGLRMGNIETVLSSSIAAVFFAAFVVAGTMWYGSATTPIELFGPTRYQWDQGYFQQEIYRRVGAGLAKNQSLSEAWSKIPEKLAFYDYIGNNPAKGGLFRAGSMDSGDGIAVGWLGHPIFRDKEGRELFVRRMPTFFETFPVVLVDGDGIVRADVPFRRAESKYSVEQVGVTIEFYGGELNGVSYSDPATVKKYARRAQLGEIFELDRATLKSDGVFRSSPRGWFTFGHASFALLFFFGHIWHGARTLFRDVFAGIDPDLDTQVEFGAFQKLGDPTTRRQAV</sequence>
<accession>Q9MTJ7</accession>
<organism>
    <name type="scientific">Oenothera elata subsp. hookeri</name>
    <name type="common">Hooker's evening primrose</name>
    <name type="synonym">Oenothera hookeri</name>
    <dbReference type="NCBI Taxonomy" id="85636"/>
    <lineage>
        <taxon>Eukaryota</taxon>
        <taxon>Viridiplantae</taxon>
        <taxon>Streptophyta</taxon>
        <taxon>Embryophyta</taxon>
        <taxon>Tracheophyta</taxon>
        <taxon>Spermatophyta</taxon>
        <taxon>Magnoliopsida</taxon>
        <taxon>eudicotyledons</taxon>
        <taxon>Gunneridae</taxon>
        <taxon>Pentapetalae</taxon>
        <taxon>rosids</taxon>
        <taxon>malvids</taxon>
        <taxon>Myrtales</taxon>
        <taxon>Onagraceae</taxon>
        <taxon>Onagroideae</taxon>
        <taxon>Onagreae</taxon>
        <taxon>Oenothera</taxon>
    </lineage>
</organism>
<gene>
    <name evidence="1" type="primary">psbB</name>
</gene>
<comment type="function">
    <text evidence="1">One of the components of the core complex of photosystem II (PSII). It binds chlorophyll and helps catalyze the primary light-induced photochemical processes of PSII. PSII is a light-driven water:plastoquinone oxidoreductase, using light energy to abstract electrons from H(2)O, generating O(2) and a proton gradient subsequently used for ATP formation.</text>
</comment>
<comment type="cofactor">
    <text evidence="1">Binds multiple chlorophylls. PSII binds additional chlorophylls, carotenoids and specific lipids.</text>
</comment>
<comment type="subunit">
    <text evidence="1">PSII is composed of 1 copy each of membrane proteins PsbA, PsbB, PsbC, PsbD, PsbE, PsbF, PsbH, PsbI, PsbJ, PsbK, PsbL, PsbM, PsbT, PsbX, PsbY, PsbZ, Psb30/Ycf12, at least 3 peripheral proteins of the oxygen-evolving complex and a large number of cofactors. It forms dimeric complexes.</text>
</comment>
<comment type="subcellular location">
    <subcellularLocation>
        <location evidence="1">Plastid</location>
        <location evidence="1">Chloroplast thylakoid membrane</location>
        <topology evidence="1">Multi-pass membrane protein</topology>
    </subcellularLocation>
</comment>
<comment type="similarity">
    <text evidence="1">Belongs to the PsbB/PsbC family. PsbB subfamily.</text>
</comment>
<protein>
    <recommendedName>
        <fullName evidence="1">Photosystem II CP47 reaction center protein</fullName>
    </recommendedName>
    <alternativeName>
        <fullName evidence="1">PSII 47 kDa protein</fullName>
    </alternativeName>
    <alternativeName>
        <fullName evidence="1">Protein CP-47</fullName>
    </alternativeName>
</protein>
<feature type="chain" id="PRO_0000077491" description="Photosystem II CP47 reaction center protein">
    <location>
        <begin position="1"/>
        <end position="508"/>
    </location>
</feature>
<feature type="transmembrane region" description="Helical" evidence="1">
    <location>
        <begin position="21"/>
        <end position="36"/>
    </location>
</feature>
<feature type="transmembrane region" description="Helical" evidence="1">
    <location>
        <begin position="101"/>
        <end position="115"/>
    </location>
</feature>
<feature type="transmembrane region" description="Helical" evidence="1">
    <location>
        <begin position="140"/>
        <end position="156"/>
    </location>
</feature>
<feature type="transmembrane region" description="Helical" evidence="1">
    <location>
        <begin position="203"/>
        <end position="218"/>
    </location>
</feature>
<feature type="transmembrane region" description="Helical" evidence="1">
    <location>
        <begin position="237"/>
        <end position="252"/>
    </location>
</feature>
<feature type="transmembrane region" description="Helical" evidence="1">
    <location>
        <begin position="457"/>
        <end position="472"/>
    </location>
</feature>
<geneLocation type="chloroplast"/>
<evidence type="ECO:0000255" key="1">
    <source>
        <dbReference type="HAMAP-Rule" id="MF_01495"/>
    </source>
</evidence>
<dbReference type="EMBL" id="X55900">
    <property type="protein sequence ID" value="CAA39391.1"/>
    <property type="molecule type" value="Genomic_DNA"/>
</dbReference>
<dbReference type="EMBL" id="AJ271079">
    <property type="protein sequence ID" value="CAB67185.1"/>
    <property type="molecule type" value="Genomic_DNA"/>
</dbReference>
<dbReference type="RefSeq" id="NP_084719.1">
    <property type="nucleotide sequence ID" value="NC_002693.2"/>
</dbReference>
<dbReference type="SMR" id="Q9MTJ7"/>
<dbReference type="GeneID" id="802805"/>
<dbReference type="GO" id="GO:0009535">
    <property type="term" value="C:chloroplast thylakoid membrane"/>
    <property type="evidence" value="ECO:0007669"/>
    <property type="project" value="UniProtKB-SubCell"/>
</dbReference>
<dbReference type="GO" id="GO:0009523">
    <property type="term" value="C:photosystem II"/>
    <property type="evidence" value="ECO:0007669"/>
    <property type="project" value="UniProtKB-KW"/>
</dbReference>
<dbReference type="GO" id="GO:0016168">
    <property type="term" value="F:chlorophyll binding"/>
    <property type="evidence" value="ECO:0007669"/>
    <property type="project" value="UniProtKB-UniRule"/>
</dbReference>
<dbReference type="GO" id="GO:0045156">
    <property type="term" value="F:electron transporter, transferring electrons within the cyclic electron transport pathway of photosynthesis activity"/>
    <property type="evidence" value="ECO:0007669"/>
    <property type="project" value="InterPro"/>
</dbReference>
<dbReference type="GO" id="GO:0009772">
    <property type="term" value="P:photosynthetic electron transport in photosystem II"/>
    <property type="evidence" value="ECO:0007669"/>
    <property type="project" value="InterPro"/>
</dbReference>
<dbReference type="FunFam" id="3.10.680.10:FF:000001">
    <property type="entry name" value="Photosystem II CP47 reaction center protein"/>
    <property type="match status" value="1"/>
</dbReference>
<dbReference type="Gene3D" id="3.10.680.10">
    <property type="entry name" value="Photosystem II CP47 reaction center protein"/>
    <property type="match status" value="1"/>
</dbReference>
<dbReference type="HAMAP" id="MF_01495">
    <property type="entry name" value="PSII_PsbB_CP47"/>
    <property type="match status" value="1"/>
</dbReference>
<dbReference type="InterPro" id="IPR000932">
    <property type="entry name" value="PS_antenna-like"/>
</dbReference>
<dbReference type="InterPro" id="IPR036001">
    <property type="entry name" value="PS_II_antenna-like_sf"/>
</dbReference>
<dbReference type="InterPro" id="IPR017486">
    <property type="entry name" value="PSII_PsbB"/>
</dbReference>
<dbReference type="NCBIfam" id="TIGR03039">
    <property type="entry name" value="PS_II_CP47"/>
    <property type="match status" value="1"/>
</dbReference>
<dbReference type="PANTHER" id="PTHR33180">
    <property type="entry name" value="PHOTOSYSTEM II CP43 REACTION CENTER PROTEIN"/>
    <property type="match status" value="1"/>
</dbReference>
<dbReference type="PANTHER" id="PTHR33180:SF35">
    <property type="entry name" value="PHOTOSYSTEM II CP47 REACTION CENTER PROTEIN"/>
    <property type="match status" value="1"/>
</dbReference>
<dbReference type="Pfam" id="PF00421">
    <property type="entry name" value="PSII"/>
    <property type="match status" value="1"/>
</dbReference>
<dbReference type="SUPFAM" id="SSF161077">
    <property type="entry name" value="Photosystem II antenna protein-like"/>
    <property type="match status" value="1"/>
</dbReference>
<name>PSBB_OENEH</name>
<reference key="1">
    <citation type="journal article" date="1990" name="Nucleic Acids Res.">
        <title>Nucleotide sequences of psbB and psbH, the plastid encoded genes for CP47 and the 10 kDa phosphoprotein of photosystem II in Oenothera hookeri and argillicola.</title>
        <authorList>
            <person name="Offermann-Steinhard K."/>
            <person name="Herrmann R.G."/>
        </authorList>
    </citation>
    <scope>NUCLEOTIDE SEQUENCE [GENOMIC DNA]</scope>
</reference>
<reference key="2">
    <citation type="journal article" date="2000" name="Mol. Gen. Genet.">
        <title>Complete nucleotide sequence of the Oenothera elata plastid chromosome, representing plastome I of the five distinguishable Euoenothera plastomes.</title>
        <authorList>
            <person name="Hupfer H."/>
            <person name="Swiatek M."/>
            <person name="Hornung S."/>
            <person name="Herrmann R.G."/>
            <person name="Maier R.M."/>
            <person name="Chiu W.-L."/>
            <person name="Sears B."/>
        </authorList>
    </citation>
    <scope>NUCLEOTIDE SEQUENCE [LARGE SCALE GENOMIC DNA]</scope>
    <source>
        <strain>cv. Johansen</strain>
    </source>
</reference>
<proteinExistence type="inferred from homology"/>